<keyword id="KW-0030">Aminoacyl-tRNA synthetase</keyword>
<keyword id="KW-0067">ATP-binding</keyword>
<keyword id="KW-0963">Cytoplasm</keyword>
<keyword id="KW-0436">Ligase</keyword>
<keyword id="KW-0547">Nucleotide-binding</keyword>
<keyword id="KW-0648">Protein biosynthesis</keyword>
<keyword id="KW-1185">Reference proteome</keyword>
<feature type="initiator methionine" description="Removed" evidence="1">
    <location>
        <position position="1"/>
    </location>
</feature>
<feature type="chain" id="PRO_0000072901" description="Glycine--tRNA ligase beta subunit">
    <location>
        <begin position="2"/>
        <end position="689"/>
    </location>
</feature>
<organism>
    <name type="scientific">Escherichia coli O157:H7</name>
    <dbReference type="NCBI Taxonomy" id="83334"/>
    <lineage>
        <taxon>Bacteria</taxon>
        <taxon>Pseudomonadati</taxon>
        <taxon>Pseudomonadota</taxon>
        <taxon>Gammaproteobacteria</taxon>
        <taxon>Enterobacterales</taxon>
        <taxon>Enterobacteriaceae</taxon>
        <taxon>Escherichia</taxon>
    </lineage>
</organism>
<reference key="1">
    <citation type="journal article" date="2001" name="Nature">
        <title>Genome sequence of enterohaemorrhagic Escherichia coli O157:H7.</title>
        <authorList>
            <person name="Perna N.T."/>
            <person name="Plunkett G. III"/>
            <person name="Burland V."/>
            <person name="Mau B."/>
            <person name="Glasner J.D."/>
            <person name="Rose D.J."/>
            <person name="Mayhew G.F."/>
            <person name="Evans P.S."/>
            <person name="Gregor J."/>
            <person name="Kirkpatrick H.A."/>
            <person name="Posfai G."/>
            <person name="Hackett J."/>
            <person name="Klink S."/>
            <person name="Boutin A."/>
            <person name="Shao Y."/>
            <person name="Miller L."/>
            <person name="Grotbeck E.J."/>
            <person name="Davis N.W."/>
            <person name="Lim A."/>
            <person name="Dimalanta E.T."/>
            <person name="Potamousis K."/>
            <person name="Apodaca J."/>
            <person name="Anantharaman T.S."/>
            <person name="Lin J."/>
            <person name="Yen G."/>
            <person name="Schwartz D.C."/>
            <person name="Welch R.A."/>
            <person name="Blattner F.R."/>
        </authorList>
    </citation>
    <scope>NUCLEOTIDE SEQUENCE [LARGE SCALE GENOMIC DNA]</scope>
    <source>
        <strain>O157:H7 / EDL933 / ATCC 700927 / EHEC</strain>
    </source>
</reference>
<reference key="2">
    <citation type="journal article" date="2001" name="DNA Res.">
        <title>Complete genome sequence of enterohemorrhagic Escherichia coli O157:H7 and genomic comparison with a laboratory strain K-12.</title>
        <authorList>
            <person name="Hayashi T."/>
            <person name="Makino K."/>
            <person name="Ohnishi M."/>
            <person name="Kurokawa K."/>
            <person name="Ishii K."/>
            <person name="Yokoyama K."/>
            <person name="Han C.-G."/>
            <person name="Ohtsubo E."/>
            <person name="Nakayama K."/>
            <person name="Murata T."/>
            <person name="Tanaka M."/>
            <person name="Tobe T."/>
            <person name="Iida T."/>
            <person name="Takami H."/>
            <person name="Honda T."/>
            <person name="Sasakawa C."/>
            <person name="Ogasawara N."/>
            <person name="Yasunaga T."/>
            <person name="Kuhara S."/>
            <person name="Shiba T."/>
            <person name="Hattori M."/>
            <person name="Shinagawa H."/>
        </authorList>
    </citation>
    <scope>NUCLEOTIDE SEQUENCE [LARGE SCALE GENOMIC DNA]</scope>
    <source>
        <strain>O157:H7 / Sakai / RIMD 0509952 / EHEC</strain>
    </source>
</reference>
<evidence type="ECO:0000250" key="1"/>
<evidence type="ECO:0000255" key="2">
    <source>
        <dbReference type="HAMAP-Rule" id="MF_00255"/>
    </source>
</evidence>
<gene>
    <name evidence="2" type="primary">glyS</name>
    <name type="ordered locus">Z4983</name>
    <name type="ordered locus">ECs4442</name>
</gene>
<accession>P67031</accession>
<accession>Q8XDN7</accession>
<name>SYGB_ECO57</name>
<comment type="catalytic activity">
    <reaction evidence="2">
        <text>tRNA(Gly) + glycine + ATP = glycyl-tRNA(Gly) + AMP + diphosphate</text>
        <dbReference type="Rhea" id="RHEA:16013"/>
        <dbReference type="Rhea" id="RHEA-COMP:9664"/>
        <dbReference type="Rhea" id="RHEA-COMP:9683"/>
        <dbReference type="ChEBI" id="CHEBI:30616"/>
        <dbReference type="ChEBI" id="CHEBI:33019"/>
        <dbReference type="ChEBI" id="CHEBI:57305"/>
        <dbReference type="ChEBI" id="CHEBI:78442"/>
        <dbReference type="ChEBI" id="CHEBI:78522"/>
        <dbReference type="ChEBI" id="CHEBI:456215"/>
        <dbReference type="EC" id="6.1.1.14"/>
    </reaction>
</comment>
<comment type="subunit">
    <text evidence="2">Tetramer of two alpha and two beta subunits.</text>
</comment>
<comment type="subcellular location">
    <subcellularLocation>
        <location evidence="2">Cytoplasm</location>
    </subcellularLocation>
</comment>
<comment type="similarity">
    <text evidence="2">Belongs to the class-II aminoacyl-tRNA synthetase family.</text>
</comment>
<protein>
    <recommendedName>
        <fullName evidence="2">Glycine--tRNA ligase beta subunit</fullName>
        <ecNumber evidence="2">6.1.1.14</ecNumber>
    </recommendedName>
    <alternativeName>
        <fullName evidence="2">Glycyl-tRNA synthetase beta subunit</fullName>
        <shortName evidence="2">GlyRS</shortName>
    </alternativeName>
</protein>
<sequence>MSEKTFLVEIGTEELPPKALRSLAESFAANFTAELDNAGLAHGTVQWFAAPRRLALKVANLAEAQPDREIEKRGPAIAQAFDAEGKPSKAAEGWARGCGITVDQAERLTTDKGEWLLYRAHVKGESTEALLPNMVATSLAKLPIPKLMRWGASDVHFVRPVHTVTLLLGDKVIPATILGIQSDRVIRGHRFMGEPEFTIDNADQYPEILRERGKVIADYEERKAKIKADAEEAARKIGGNADLSESLLEEVASLVEWPVVLTAKFEEKFLAVPSEALVYTMKGDQKYFPVYANDGKLLPNFIFVANIESKDPQQIISGNEKVVRPRLADAEFFFNTDRKKRLEDNLPRLQTVLFQQQLGTLRDKTDRIQALAGWIAEQIGADVNHATRAGLLSKCDLMTNMVFEFTDTQGVMGMHYARHDGEAEDVAVALNEQYQPRFAGDDLPSNPVACALAIADKMDTLAGIFGIGQHPKGDKDPFALRRAALGVLRIIVEKNLNLDLQTLTEEAVRLYGDKLTNANVVDDVIDFMLGRFRAWYQDEGYTVDTIQAVLARRPTRPADFDARMKAVSHFRTLEAAAALAAANKRVSNILAKSDEVLSDRVNASTLKEPEEIKLAMQVVVLRDKLEPYFAEGRYQDALVELAELREPVDAFFDKVMVMVDDKELRINRLTMLEKLRELFLRVADISLLQ</sequence>
<dbReference type="EC" id="6.1.1.14" evidence="2"/>
<dbReference type="EMBL" id="AE005174">
    <property type="protein sequence ID" value="AAG58707.1"/>
    <property type="molecule type" value="Genomic_DNA"/>
</dbReference>
<dbReference type="EMBL" id="BA000007">
    <property type="protein sequence ID" value="BAB37865.1"/>
    <property type="molecule type" value="Genomic_DNA"/>
</dbReference>
<dbReference type="PIR" id="B91184">
    <property type="entry name" value="B91184"/>
</dbReference>
<dbReference type="PIR" id="G86030">
    <property type="entry name" value="G86030"/>
</dbReference>
<dbReference type="RefSeq" id="NP_312469.1">
    <property type="nucleotide sequence ID" value="NC_002695.1"/>
</dbReference>
<dbReference type="RefSeq" id="WP_001291788.1">
    <property type="nucleotide sequence ID" value="NZ_VOAI01000004.1"/>
</dbReference>
<dbReference type="SMR" id="P67031"/>
<dbReference type="STRING" id="155864.Z4983"/>
<dbReference type="GeneID" id="75173758"/>
<dbReference type="GeneID" id="915631"/>
<dbReference type="KEGG" id="ece:Z4983"/>
<dbReference type="KEGG" id="ecs:ECs_4442"/>
<dbReference type="PATRIC" id="fig|386585.9.peg.4650"/>
<dbReference type="eggNOG" id="COG0751">
    <property type="taxonomic scope" value="Bacteria"/>
</dbReference>
<dbReference type="HOGENOM" id="CLU_007220_2_2_6"/>
<dbReference type="OMA" id="LPIPKRM"/>
<dbReference type="Proteomes" id="UP000000558">
    <property type="component" value="Chromosome"/>
</dbReference>
<dbReference type="Proteomes" id="UP000002519">
    <property type="component" value="Chromosome"/>
</dbReference>
<dbReference type="GO" id="GO:0005829">
    <property type="term" value="C:cytosol"/>
    <property type="evidence" value="ECO:0007669"/>
    <property type="project" value="TreeGrafter"/>
</dbReference>
<dbReference type="GO" id="GO:0004814">
    <property type="term" value="F:arginine-tRNA ligase activity"/>
    <property type="evidence" value="ECO:0007669"/>
    <property type="project" value="InterPro"/>
</dbReference>
<dbReference type="GO" id="GO:0005524">
    <property type="term" value="F:ATP binding"/>
    <property type="evidence" value="ECO:0007669"/>
    <property type="project" value="UniProtKB-UniRule"/>
</dbReference>
<dbReference type="GO" id="GO:0004820">
    <property type="term" value="F:glycine-tRNA ligase activity"/>
    <property type="evidence" value="ECO:0007669"/>
    <property type="project" value="UniProtKB-UniRule"/>
</dbReference>
<dbReference type="GO" id="GO:0006420">
    <property type="term" value="P:arginyl-tRNA aminoacylation"/>
    <property type="evidence" value="ECO:0007669"/>
    <property type="project" value="InterPro"/>
</dbReference>
<dbReference type="GO" id="GO:0006426">
    <property type="term" value="P:glycyl-tRNA aminoacylation"/>
    <property type="evidence" value="ECO:0007669"/>
    <property type="project" value="UniProtKB-UniRule"/>
</dbReference>
<dbReference type="HAMAP" id="MF_00255">
    <property type="entry name" value="Gly_tRNA_synth_beta"/>
    <property type="match status" value="1"/>
</dbReference>
<dbReference type="InterPro" id="IPR008909">
    <property type="entry name" value="DALR_anticod-bd"/>
</dbReference>
<dbReference type="InterPro" id="IPR015944">
    <property type="entry name" value="Gly-tRNA-synth_bsu"/>
</dbReference>
<dbReference type="InterPro" id="IPR006194">
    <property type="entry name" value="Gly-tRNA-synth_heterodimer"/>
</dbReference>
<dbReference type="NCBIfam" id="TIGR00211">
    <property type="entry name" value="glyS"/>
    <property type="match status" value="1"/>
</dbReference>
<dbReference type="PANTHER" id="PTHR30075:SF2">
    <property type="entry name" value="GLYCINE--TRNA LIGASE, CHLOROPLASTIC_MITOCHONDRIAL 2"/>
    <property type="match status" value="1"/>
</dbReference>
<dbReference type="PANTHER" id="PTHR30075">
    <property type="entry name" value="GLYCYL-TRNA SYNTHETASE"/>
    <property type="match status" value="1"/>
</dbReference>
<dbReference type="Pfam" id="PF05746">
    <property type="entry name" value="DALR_1"/>
    <property type="match status" value="1"/>
</dbReference>
<dbReference type="Pfam" id="PF02092">
    <property type="entry name" value="tRNA_synt_2f"/>
    <property type="match status" value="1"/>
</dbReference>
<dbReference type="PRINTS" id="PR01045">
    <property type="entry name" value="TRNASYNTHGB"/>
</dbReference>
<dbReference type="SUPFAM" id="SSF109604">
    <property type="entry name" value="HD-domain/PDEase-like"/>
    <property type="match status" value="1"/>
</dbReference>
<dbReference type="PROSITE" id="PS50861">
    <property type="entry name" value="AA_TRNA_LIGASE_II_GLYAB"/>
    <property type="match status" value="1"/>
</dbReference>
<proteinExistence type="inferred from homology"/>